<protein>
    <recommendedName>
        <fullName evidence="1">Ribosomal RNA large subunit methyltransferase E</fullName>
        <ecNumber evidence="1">2.1.1.166</ecNumber>
    </recommendedName>
    <alternativeName>
        <fullName evidence="1">23S rRNA Um2552 methyltransferase</fullName>
    </alternativeName>
    <alternativeName>
        <fullName evidence="1">rRNA (uridine-2'-O-)-methyltransferase</fullName>
    </alternativeName>
</protein>
<keyword id="KW-0963">Cytoplasm</keyword>
<keyword id="KW-0489">Methyltransferase</keyword>
<keyword id="KW-0698">rRNA processing</keyword>
<keyword id="KW-0949">S-adenosyl-L-methionine</keyword>
<keyword id="KW-0808">Transferase</keyword>
<feature type="chain" id="PRO_1000087702" description="Ribosomal RNA large subunit methyltransferase E">
    <location>
        <begin position="1"/>
        <end position="208"/>
    </location>
</feature>
<feature type="active site" description="Proton acceptor" evidence="1">
    <location>
        <position position="162"/>
    </location>
</feature>
<feature type="binding site" evidence="1">
    <location>
        <position position="61"/>
    </location>
    <ligand>
        <name>S-adenosyl-L-methionine</name>
        <dbReference type="ChEBI" id="CHEBI:59789"/>
    </ligand>
</feature>
<feature type="binding site" evidence="1">
    <location>
        <position position="63"/>
    </location>
    <ligand>
        <name>S-adenosyl-L-methionine</name>
        <dbReference type="ChEBI" id="CHEBI:59789"/>
    </ligand>
</feature>
<feature type="binding site" evidence="1">
    <location>
        <position position="81"/>
    </location>
    <ligand>
        <name>S-adenosyl-L-methionine</name>
        <dbReference type="ChEBI" id="CHEBI:59789"/>
    </ligand>
</feature>
<feature type="binding site" evidence="1">
    <location>
        <position position="97"/>
    </location>
    <ligand>
        <name>S-adenosyl-L-methionine</name>
        <dbReference type="ChEBI" id="CHEBI:59789"/>
    </ligand>
</feature>
<feature type="binding site" evidence="1">
    <location>
        <position position="122"/>
    </location>
    <ligand>
        <name>S-adenosyl-L-methionine</name>
        <dbReference type="ChEBI" id="CHEBI:59789"/>
    </ligand>
</feature>
<name>RLME_PSEPG</name>
<organism>
    <name type="scientific">Pseudomonas putida (strain GB-1)</name>
    <dbReference type="NCBI Taxonomy" id="76869"/>
    <lineage>
        <taxon>Bacteria</taxon>
        <taxon>Pseudomonadati</taxon>
        <taxon>Pseudomonadota</taxon>
        <taxon>Gammaproteobacteria</taxon>
        <taxon>Pseudomonadales</taxon>
        <taxon>Pseudomonadaceae</taxon>
        <taxon>Pseudomonas</taxon>
    </lineage>
</organism>
<proteinExistence type="inferred from homology"/>
<comment type="function">
    <text evidence="1">Specifically methylates the uridine in position 2552 of 23S rRNA at the 2'-O position of the ribose in the fully assembled 50S ribosomal subunit.</text>
</comment>
<comment type="catalytic activity">
    <reaction evidence="1">
        <text>uridine(2552) in 23S rRNA + S-adenosyl-L-methionine = 2'-O-methyluridine(2552) in 23S rRNA + S-adenosyl-L-homocysteine + H(+)</text>
        <dbReference type="Rhea" id="RHEA:42720"/>
        <dbReference type="Rhea" id="RHEA-COMP:10202"/>
        <dbReference type="Rhea" id="RHEA-COMP:10203"/>
        <dbReference type="ChEBI" id="CHEBI:15378"/>
        <dbReference type="ChEBI" id="CHEBI:57856"/>
        <dbReference type="ChEBI" id="CHEBI:59789"/>
        <dbReference type="ChEBI" id="CHEBI:65315"/>
        <dbReference type="ChEBI" id="CHEBI:74478"/>
        <dbReference type="EC" id="2.1.1.166"/>
    </reaction>
</comment>
<comment type="subcellular location">
    <subcellularLocation>
        <location evidence="1">Cytoplasm</location>
    </subcellularLocation>
</comment>
<comment type="similarity">
    <text evidence="1">Belongs to the class I-like SAM-binding methyltransferase superfamily. RNA methyltransferase RlmE family.</text>
</comment>
<sequence length="208" mass="23236">MVQRSKSSANWLREHFNDPFVKQAQKDGYRSRASYKLLEIQEKDRLIRPGMSVIDLGAAPGGWSQVTSRLIGGQGRLIASDILEMDSIADVTFIQGDFTHDEVLQRILEAVGDSHVDLVISDMAPNMSGTPAVDIPRAMFLCELALDLATRVLKPGGDFLIKIFQGEGFDVYLKDVRSKFDKVQMRKPSSSRDRSREQYLLGRGFKGA</sequence>
<reference key="1">
    <citation type="submission" date="2008-01" db="EMBL/GenBank/DDBJ databases">
        <title>Complete sequence of Pseudomonas putida GB-1.</title>
        <authorList>
            <consortium name="US DOE Joint Genome Institute"/>
            <person name="Copeland A."/>
            <person name="Lucas S."/>
            <person name="Lapidus A."/>
            <person name="Barry K."/>
            <person name="Glavina del Rio T."/>
            <person name="Dalin E."/>
            <person name="Tice H."/>
            <person name="Pitluck S."/>
            <person name="Bruce D."/>
            <person name="Goodwin L."/>
            <person name="Chertkov O."/>
            <person name="Brettin T."/>
            <person name="Detter J.C."/>
            <person name="Han C."/>
            <person name="Kuske C.R."/>
            <person name="Schmutz J."/>
            <person name="Larimer F."/>
            <person name="Land M."/>
            <person name="Hauser L."/>
            <person name="Kyrpides N."/>
            <person name="Kim E."/>
            <person name="McCarthy J.K."/>
            <person name="Richardson P."/>
        </authorList>
    </citation>
    <scope>NUCLEOTIDE SEQUENCE [LARGE SCALE GENOMIC DNA]</scope>
    <source>
        <strain>GB-1</strain>
    </source>
</reference>
<evidence type="ECO:0000255" key="1">
    <source>
        <dbReference type="HAMAP-Rule" id="MF_01547"/>
    </source>
</evidence>
<accession>B0KHY6</accession>
<gene>
    <name evidence="1" type="primary">rlmE</name>
    <name evidence="1" type="synonym">ftsJ</name>
    <name evidence="1" type="synonym">rrmJ</name>
    <name type="ordered locus">PputGB1_4720</name>
</gene>
<dbReference type="EC" id="2.1.1.166" evidence="1"/>
<dbReference type="EMBL" id="CP000926">
    <property type="protein sequence ID" value="ABZ00607.1"/>
    <property type="molecule type" value="Genomic_DNA"/>
</dbReference>
<dbReference type="RefSeq" id="WP_012274251.1">
    <property type="nucleotide sequence ID" value="NC_010322.1"/>
</dbReference>
<dbReference type="SMR" id="B0KHY6"/>
<dbReference type="GeneID" id="49870781"/>
<dbReference type="KEGG" id="ppg:PputGB1_4720"/>
<dbReference type="eggNOG" id="COG0293">
    <property type="taxonomic scope" value="Bacteria"/>
</dbReference>
<dbReference type="HOGENOM" id="CLU_009422_4_0_6"/>
<dbReference type="Proteomes" id="UP000002157">
    <property type="component" value="Chromosome"/>
</dbReference>
<dbReference type="GO" id="GO:0005737">
    <property type="term" value="C:cytoplasm"/>
    <property type="evidence" value="ECO:0007669"/>
    <property type="project" value="UniProtKB-SubCell"/>
</dbReference>
<dbReference type="GO" id="GO:0008650">
    <property type="term" value="F:rRNA (uridine-2'-O-)-methyltransferase activity"/>
    <property type="evidence" value="ECO:0007669"/>
    <property type="project" value="UniProtKB-UniRule"/>
</dbReference>
<dbReference type="FunFam" id="3.40.50.150:FF:000005">
    <property type="entry name" value="Ribosomal RNA large subunit methyltransferase E"/>
    <property type="match status" value="1"/>
</dbReference>
<dbReference type="Gene3D" id="3.40.50.150">
    <property type="entry name" value="Vaccinia Virus protein VP39"/>
    <property type="match status" value="1"/>
</dbReference>
<dbReference type="HAMAP" id="MF_01547">
    <property type="entry name" value="RNA_methyltr_E"/>
    <property type="match status" value="1"/>
</dbReference>
<dbReference type="InterPro" id="IPR050082">
    <property type="entry name" value="RNA_methyltr_RlmE"/>
</dbReference>
<dbReference type="InterPro" id="IPR002877">
    <property type="entry name" value="RNA_MeTrfase_FtsJ_dom"/>
</dbReference>
<dbReference type="InterPro" id="IPR015507">
    <property type="entry name" value="rRNA-MeTfrase_E"/>
</dbReference>
<dbReference type="InterPro" id="IPR029063">
    <property type="entry name" value="SAM-dependent_MTases_sf"/>
</dbReference>
<dbReference type="NCBIfam" id="NF008390">
    <property type="entry name" value="PRK11188.1"/>
    <property type="match status" value="1"/>
</dbReference>
<dbReference type="PANTHER" id="PTHR10920">
    <property type="entry name" value="RIBOSOMAL RNA METHYLTRANSFERASE"/>
    <property type="match status" value="1"/>
</dbReference>
<dbReference type="PANTHER" id="PTHR10920:SF18">
    <property type="entry name" value="RRNA METHYLTRANSFERASE 2, MITOCHONDRIAL"/>
    <property type="match status" value="1"/>
</dbReference>
<dbReference type="Pfam" id="PF01728">
    <property type="entry name" value="FtsJ"/>
    <property type="match status" value="1"/>
</dbReference>
<dbReference type="PIRSF" id="PIRSF005461">
    <property type="entry name" value="23S_rRNA_mtase"/>
    <property type="match status" value="1"/>
</dbReference>
<dbReference type="SUPFAM" id="SSF53335">
    <property type="entry name" value="S-adenosyl-L-methionine-dependent methyltransferases"/>
    <property type="match status" value="1"/>
</dbReference>